<evidence type="ECO:0000250" key="1"/>
<evidence type="ECO:0000269" key="2">
    <source>
    </source>
</evidence>
<evidence type="ECO:0000305" key="3"/>
<comment type="function">
    <text evidence="2">Acts as a phosphosugar phosphatase on a broad range of sugar phosphate substrates with preferential activity on D-ribose-5-phosphate, 2-deoxy-D-ribose-5-phosphate, 2-deoxy-D-glucose-6-phosphate, and D-mannose-6-phosphate and with a lower activity on D-fructose-1-phosphate, D-glucose-6-phosphate, DL-glycerol-3-phosphate, and D-fructose-6-phosphate.</text>
</comment>
<comment type="cofactor">
    <cofactor evidence="1">
        <name>Mg(2+)</name>
        <dbReference type="ChEBI" id="CHEBI:18420"/>
    </cofactor>
</comment>
<comment type="biophysicochemical properties">
    <kinetics>
        <KM evidence="2">3.6 mM for D-Ribose-5-phosphate</KM>
        <KM evidence="2">4.5 mM for 2-Deoxy-D-ribose-5-phosphate</KM>
        <KM evidence="2">4.6 mM for 2-Deoxy-D-glucose-6-phosphate</KM>
        <KM evidence="2">4.9 mM for D-Mannose-6-phosphate</KM>
        <KM evidence="2">6.9 mM for D-Fructose-1-phosphate</KM>
        <KM evidence="2">7.1 mM for D-Glucose-6-phosphate</KM>
        <KM evidence="2">7.3 mM for DL-Glycerol-3-phosphate</KM>
        <KM evidence="2">7.7 mM for D-Fructose-6-phosphate</KM>
        <Vmax evidence="2">552.0 nmol/sec/mg enzyme toward D-Ribose-5-phosphate</Vmax>
        <Vmax evidence="2">476.0 nmol/sec/mg enzyme toward 2-Deoxy-D-ribose-5-phosphate</Vmax>
        <Vmax evidence="2">472.0 nmol/sec/mg enzyme toward 2-Deoxy-D-glucose-6-phosphate</Vmax>
        <Vmax evidence="2">464.0 nmol/sec/mg enzyme toward D-Mannose-6-phosphate</Vmax>
        <Vmax evidence="2">368.0 nmol/sec/mg enzyme toward D-Fructose-1-phosphate</Vmax>
        <Vmax evidence="2">348.0 nmol/sec/mg enzyme toward D-Glucose-6-phosphate</Vmax>
        <Vmax evidence="2">332.0 nmol/sec/mg enzyme toward DL-Glycerol-3-phosphate</Vmax>
        <Vmax evidence="2">276.0 nmol/sec/mg enzyme toward D-Fructose-6-phosphate</Vmax>
    </kinetics>
    <phDependence>
        <text evidence="2">Optimum pH is 7.0.</text>
    </phDependence>
</comment>
<comment type="tissue specificity">
    <text evidence="2">Ubiquitous with highest expression in flowers.</text>
</comment>
<comment type="induction">
    <text evidence="2">Induced by NaCl and sorbitol.</text>
</comment>
<comment type="similarity">
    <text evidence="3">Belongs to the HAD-like hydrolase superfamily. DOG/GPP family.</text>
</comment>
<dbReference type="EC" id="3.1.3.-"/>
<dbReference type="EMBL" id="AC005499">
    <property type="protein sequence ID" value="AAC67344.2"/>
    <property type="molecule type" value="Genomic_DNA"/>
</dbReference>
<dbReference type="EMBL" id="CP002685">
    <property type="protein sequence ID" value="AEC09579.1"/>
    <property type="molecule type" value="Genomic_DNA"/>
</dbReference>
<dbReference type="EMBL" id="AY056406">
    <property type="protein sequence ID" value="AAL08262.1"/>
    <property type="molecule type" value="mRNA"/>
</dbReference>
<dbReference type="EMBL" id="AY081707">
    <property type="protein sequence ID" value="AAL87360.1"/>
    <property type="molecule type" value="mRNA"/>
</dbReference>
<dbReference type="EMBL" id="AY088003">
    <property type="protein sequence ID" value="AAM65549.1"/>
    <property type="molecule type" value="mRNA"/>
</dbReference>
<dbReference type="PIR" id="G84808">
    <property type="entry name" value="G84808"/>
</dbReference>
<dbReference type="RefSeq" id="NP_565895.1">
    <property type="nucleotide sequence ID" value="NM_129431.2"/>
</dbReference>
<dbReference type="SMR" id="Q9ZVJ5"/>
<dbReference type="FunCoup" id="Q9ZVJ5">
    <property type="interactions" value="289"/>
</dbReference>
<dbReference type="STRING" id="3702.Q9ZVJ5"/>
<dbReference type="PaxDb" id="3702-AT2G38740.1"/>
<dbReference type="ProteomicsDB" id="228245"/>
<dbReference type="EnsemblPlants" id="AT2G38740.1">
    <property type="protein sequence ID" value="AT2G38740.1"/>
    <property type="gene ID" value="AT2G38740"/>
</dbReference>
<dbReference type="GeneID" id="818456"/>
<dbReference type="Gramene" id="AT2G38740.1">
    <property type="protein sequence ID" value="AT2G38740.1"/>
    <property type="gene ID" value="AT2G38740"/>
</dbReference>
<dbReference type="KEGG" id="ath:AT2G38740"/>
<dbReference type="Araport" id="AT2G38740"/>
<dbReference type="TAIR" id="AT2G38740">
    <property type="gene designation" value="SGPP"/>
</dbReference>
<dbReference type="eggNOG" id="KOG2914">
    <property type="taxonomic scope" value="Eukaryota"/>
</dbReference>
<dbReference type="HOGENOM" id="CLU_045011_7_0_1"/>
<dbReference type="InParanoid" id="Q9ZVJ5"/>
<dbReference type="OMA" id="FTHEQNE"/>
<dbReference type="OrthoDB" id="40579at2759"/>
<dbReference type="PhylomeDB" id="Q9ZVJ5"/>
<dbReference type="BRENDA" id="3.1.3.23">
    <property type="organism ID" value="399"/>
</dbReference>
<dbReference type="CD-CODE" id="4299E36E">
    <property type="entry name" value="Nucleolus"/>
</dbReference>
<dbReference type="PRO" id="PR:Q9ZVJ5"/>
<dbReference type="Proteomes" id="UP000006548">
    <property type="component" value="Chromosome 2"/>
</dbReference>
<dbReference type="ExpressionAtlas" id="Q9ZVJ5">
    <property type="expression patterns" value="baseline and differential"/>
</dbReference>
<dbReference type="GO" id="GO:0005886">
    <property type="term" value="C:plasma membrane"/>
    <property type="evidence" value="ECO:0007005"/>
    <property type="project" value="TAIR"/>
</dbReference>
<dbReference type="GO" id="GO:0046872">
    <property type="term" value="F:metal ion binding"/>
    <property type="evidence" value="ECO:0007669"/>
    <property type="project" value="UniProtKB-KW"/>
</dbReference>
<dbReference type="GO" id="GO:0050308">
    <property type="term" value="F:sugar-phosphatase activity"/>
    <property type="evidence" value="ECO:0000314"/>
    <property type="project" value="CACAO"/>
</dbReference>
<dbReference type="CDD" id="cd07505">
    <property type="entry name" value="HAD_BPGM-like"/>
    <property type="match status" value="1"/>
</dbReference>
<dbReference type="Gene3D" id="3.40.50.1000">
    <property type="entry name" value="HAD superfamily/HAD-like"/>
    <property type="match status" value="1"/>
</dbReference>
<dbReference type="Gene3D" id="1.10.150.240">
    <property type="entry name" value="Putative phosphatase, domain 2"/>
    <property type="match status" value="1"/>
</dbReference>
<dbReference type="InterPro" id="IPR051600">
    <property type="entry name" value="Beta-PGM-like"/>
</dbReference>
<dbReference type="InterPro" id="IPR036412">
    <property type="entry name" value="HAD-like_sf"/>
</dbReference>
<dbReference type="InterPro" id="IPR006439">
    <property type="entry name" value="HAD-SF_hydro_IA"/>
</dbReference>
<dbReference type="InterPro" id="IPR041492">
    <property type="entry name" value="HAD_2"/>
</dbReference>
<dbReference type="InterPro" id="IPR023214">
    <property type="entry name" value="HAD_sf"/>
</dbReference>
<dbReference type="InterPro" id="IPR023198">
    <property type="entry name" value="PGP-like_dom2"/>
</dbReference>
<dbReference type="NCBIfam" id="TIGR01509">
    <property type="entry name" value="HAD-SF-IA-v3"/>
    <property type="match status" value="1"/>
</dbReference>
<dbReference type="PANTHER" id="PTHR46193">
    <property type="entry name" value="6-PHOSPHOGLUCONATE PHOSPHATASE"/>
    <property type="match status" value="1"/>
</dbReference>
<dbReference type="PANTHER" id="PTHR46193:SF9">
    <property type="entry name" value="HALOACID DEHALOGENASE-LIKE HYDROLASE DOMAIN-CONTAINING PROTEIN SGPP"/>
    <property type="match status" value="1"/>
</dbReference>
<dbReference type="Pfam" id="PF13419">
    <property type="entry name" value="HAD_2"/>
    <property type="match status" value="1"/>
</dbReference>
<dbReference type="PRINTS" id="PR00413">
    <property type="entry name" value="HADHALOGNASE"/>
</dbReference>
<dbReference type="SFLD" id="SFLDG01135">
    <property type="entry name" value="C1.5.6:_HAD__Beta-PGM__Phospha"/>
    <property type="match status" value="1"/>
</dbReference>
<dbReference type="SFLD" id="SFLDG01129">
    <property type="entry name" value="C1.5:_HAD__Beta-PGM__Phosphata"/>
    <property type="match status" value="1"/>
</dbReference>
<dbReference type="SUPFAM" id="SSF56784">
    <property type="entry name" value="HAD-like"/>
    <property type="match status" value="1"/>
</dbReference>
<feature type="chain" id="PRO_0000424319" description="Haloacid dehalogenase-like hydrolase domain-containing protein Sgpp">
    <location>
        <begin position="1"/>
        <end position="244"/>
    </location>
</feature>
<feature type="active site" description="Nucleophile" evidence="1">
    <location>
        <position position="28"/>
    </location>
</feature>
<feature type="active site" description="Proton donor" evidence="1">
    <location>
        <position position="30"/>
    </location>
</feature>
<feature type="binding site" evidence="1">
    <location>
        <position position="28"/>
    </location>
    <ligand>
        <name>Mg(2+)</name>
        <dbReference type="ChEBI" id="CHEBI:18420"/>
    </ligand>
</feature>
<feature type="binding site" evidence="1">
    <location>
        <position position="30"/>
    </location>
    <ligand>
        <name>Mg(2+)</name>
        <dbReference type="ChEBI" id="CHEBI:18420"/>
    </ligand>
</feature>
<feature type="binding site" evidence="1">
    <location>
        <position position="189"/>
    </location>
    <ligand>
        <name>Mg(2+)</name>
        <dbReference type="ChEBI" id="CHEBI:18420"/>
    </ligand>
</feature>
<protein>
    <recommendedName>
        <fullName>Haloacid dehalogenase-like hydrolase domain-containing protein Sgpp</fullName>
        <ecNumber>3.1.3.-</ecNumber>
    </recommendedName>
    <alternativeName>
        <fullName>Subclass I phosphosugar phosphatase</fullName>
        <shortName>AtSgpp</shortName>
    </alternativeName>
</protein>
<gene>
    <name type="primary">SGPP</name>
    <name type="ordered locus">At2g38740</name>
    <name type="ORF">T6A23.6</name>
</gene>
<keyword id="KW-0378">Hydrolase</keyword>
<keyword id="KW-0460">Magnesium</keyword>
<keyword id="KW-0479">Metal-binding</keyword>
<keyword id="KW-1185">Reference proteome</keyword>
<sequence>MNGFSDLNPSESKPSLSQLAPLEAILFDVDGTLCDSDPIHLIAFQELLQEIGFNNGVPIDEKFFVENIAGKHNSEIALLLFPDDVSRGLKFCDEKEALYRKIVAEKIKPLDGLIKLTKWIEDRGLKRAAVTNAPKENAELMISKLGLTDFFQAVILGSECEFPKPHPGPYLKALEVLNVSKEHTLVFEDSISGIKAGVAAGMPVIGLTTGNPASLLMQAKPAFLIENYADPKLWAVLEELDNKS</sequence>
<reference key="1">
    <citation type="journal article" date="1999" name="Nature">
        <title>Sequence and analysis of chromosome 2 of the plant Arabidopsis thaliana.</title>
        <authorList>
            <person name="Lin X."/>
            <person name="Kaul S."/>
            <person name="Rounsley S.D."/>
            <person name="Shea T.P."/>
            <person name="Benito M.-I."/>
            <person name="Town C.D."/>
            <person name="Fujii C.Y."/>
            <person name="Mason T.M."/>
            <person name="Bowman C.L."/>
            <person name="Barnstead M.E."/>
            <person name="Feldblyum T.V."/>
            <person name="Buell C.R."/>
            <person name="Ketchum K.A."/>
            <person name="Lee J.J."/>
            <person name="Ronning C.M."/>
            <person name="Koo H.L."/>
            <person name="Moffat K.S."/>
            <person name="Cronin L.A."/>
            <person name="Shen M."/>
            <person name="Pai G."/>
            <person name="Van Aken S."/>
            <person name="Umayam L."/>
            <person name="Tallon L.J."/>
            <person name="Gill J.E."/>
            <person name="Adams M.D."/>
            <person name="Carrera A.J."/>
            <person name="Creasy T.H."/>
            <person name="Goodman H.M."/>
            <person name="Somerville C.R."/>
            <person name="Copenhaver G.P."/>
            <person name="Preuss D."/>
            <person name="Nierman W.C."/>
            <person name="White O."/>
            <person name="Eisen J.A."/>
            <person name="Salzberg S.L."/>
            <person name="Fraser C.M."/>
            <person name="Venter J.C."/>
        </authorList>
    </citation>
    <scope>NUCLEOTIDE SEQUENCE [LARGE SCALE GENOMIC DNA]</scope>
    <source>
        <strain>cv. Columbia</strain>
    </source>
</reference>
<reference key="2">
    <citation type="journal article" date="2017" name="Plant J.">
        <title>Araport11: a complete reannotation of the Arabidopsis thaliana reference genome.</title>
        <authorList>
            <person name="Cheng C.Y."/>
            <person name="Krishnakumar V."/>
            <person name="Chan A.P."/>
            <person name="Thibaud-Nissen F."/>
            <person name="Schobel S."/>
            <person name="Town C.D."/>
        </authorList>
    </citation>
    <scope>GENOME REANNOTATION</scope>
    <source>
        <strain>cv. Columbia</strain>
    </source>
</reference>
<reference key="3">
    <citation type="journal article" date="2003" name="Science">
        <title>Empirical analysis of transcriptional activity in the Arabidopsis genome.</title>
        <authorList>
            <person name="Yamada K."/>
            <person name="Lim J."/>
            <person name="Dale J.M."/>
            <person name="Chen H."/>
            <person name="Shinn P."/>
            <person name="Palm C.J."/>
            <person name="Southwick A.M."/>
            <person name="Wu H.C."/>
            <person name="Kim C.J."/>
            <person name="Nguyen M."/>
            <person name="Pham P.K."/>
            <person name="Cheuk R.F."/>
            <person name="Karlin-Newmann G."/>
            <person name="Liu S.X."/>
            <person name="Lam B."/>
            <person name="Sakano H."/>
            <person name="Wu T."/>
            <person name="Yu G."/>
            <person name="Miranda M."/>
            <person name="Quach H.L."/>
            <person name="Tripp M."/>
            <person name="Chang C.H."/>
            <person name="Lee J.M."/>
            <person name="Toriumi M.J."/>
            <person name="Chan M.M."/>
            <person name="Tang C.C."/>
            <person name="Onodera C.S."/>
            <person name="Deng J.M."/>
            <person name="Akiyama K."/>
            <person name="Ansari Y."/>
            <person name="Arakawa T."/>
            <person name="Banh J."/>
            <person name="Banno F."/>
            <person name="Bowser L."/>
            <person name="Brooks S.Y."/>
            <person name="Carninci P."/>
            <person name="Chao Q."/>
            <person name="Choy N."/>
            <person name="Enju A."/>
            <person name="Goldsmith A.D."/>
            <person name="Gurjal M."/>
            <person name="Hansen N.F."/>
            <person name="Hayashizaki Y."/>
            <person name="Johnson-Hopson C."/>
            <person name="Hsuan V.W."/>
            <person name="Iida K."/>
            <person name="Karnes M."/>
            <person name="Khan S."/>
            <person name="Koesema E."/>
            <person name="Ishida J."/>
            <person name="Jiang P.X."/>
            <person name="Jones T."/>
            <person name="Kawai J."/>
            <person name="Kamiya A."/>
            <person name="Meyers C."/>
            <person name="Nakajima M."/>
            <person name="Narusaka M."/>
            <person name="Seki M."/>
            <person name="Sakurai T."/>
            <person name="Satou M."/>
            <person name="Tamse R."/>
            <person name="Vaysberg M."/>
            <person name="Wallender E.K."/>
            <person name="Wong C."/>
            <person name="Yamamura Y."/>
            <person name="Yuan S."/>
            <person name="Shinozaki K."/>
            <person name="Davis R.W."/>
            <person name="Theologis A."/>
            <person name="Ecker J.R."/>
        </authorList>
    </citation>
    <scope>NUCLEOTIDE SEQUENCE [LARGE SCALE MRNA]</scope>
    <source>
        <strain>cv. Columbia</strain>
    </source>
</reference>
<reference key="4">
    <citation type="submission" date="2002-03" db="EMBL/GenBank/DDBJ databases">
        <title>Full-length cDNA from Arabidopsis thaliana.</title>
        <authorList>
            <person name="Brover V.V."/>
            <person name="Troukhan M.E."/>
            <person name="Alexandrov N.A."/>
            <person name="Lu Y.-P."/>
            <person name="Flavell R.B."/>
            <person name="Feldmann K.A."/>
        </authorList>
    </citation>
    <scope>NUCLEOTIDE SEQUENCE [LARGE SCALE MRNA]</scope>
</reference>
<reference key="5">
    <citation type="journal article" date="2013" name="Planta">
        <title>HAD hydrolase function unveiled by substrate screening: enzymatic characterization of Arabidopsis thaliana subclass I phosphosugar phosphatase AtSgpp.</title>
        <authorList>
            <person name="Caparros-Martin J.A."/>
            <person name="McCarthy-Suarez I."/>
            <person name="Culianez-Macia F.A."/>
        </authorList>
    </citation>
    <scope>BIOPHYSICOCHEMICAL PROPERTIES</scope>
    <scope>TISSUE SPECIFICITY</scope>
    <scope>INDUCTION</scope>
    <scope>FUNCTION</scope>
</reference>
<proteinExistence type="evidence at protein level"/>
<accession>Q9ZVJ5</accession>
<accession>Q93ZP4</accession>
<organism>
    <name type="scientific">Arabidopsis thaliana</name>
    <name type="common">Mouse-ear cress</name>
    <dbReference type="NCBI Taxonomy" id="3702"/>
    <lineage>
        <taxon>Eukaryota</taxon>
        <taxon>Viridiplantae</taxon>
        <taxon>Streptophyta</taxon>
        <taxon>Embryophyta</taxon>
        <taxon>Tracheophyta</taxon>
        <taxon>Spermatophyta</taxon>
        <taxon>Magnoliopsida</taxon>
        <taxon>eudicotyledons</taxon>
        <taxon>Gunneridae</taxon>
        <taxon>Pentapetalae</taxon>
        <taxon>rosids</taxon>
        <taxon>malvids</taxon>
        <taxon>Brassicales</taxon>
        <taxon>Brassicaceae</taxon>
        <taxon>Camelineae</taxon>
        <taxon>Arabidopsis</taxon>
    </lineage>
</organism>
<name>SGGP_ARATH</name>